<gene>
    <name type="primary">GUP1</name>
</gene>
<sequence length="582" mass="68991">MVIPRYHLIPTNCILSYHIKMSYLTDILKLFSLETLDTRLYPSSNTAKKQSIIKQANPKSRWSTIEFKFYYLVFLIIVPLMFKAGMESANENNPNYPKYEHLLSNGWIFGRKVDNSDQQYRFFRNNFPLLCLLIIIHVGLRRVINRIIPLSSKRTYFDFIFGIIFLIGAHGVNVLKLSIHLLINYLIGKYIKNYKLSLWITWIYGISSLFFNEWYGNYTLGLSFLSTGYTGIIPRWDVFYNFTLLRMISFNFDYLERQQKLNNMTLPKEESNGSLLNLDDRERLTAPLPIEDYNIFNYISYLTYTPLFIAGPILTFNDYIYQSNYQQSSSTKDYHRIMMYLIRFIFCLLTLEFILHFMYVVAASKTKSWEGNLPFQISMLGMFNLNIIWLKLLIPWRLFRLWSLLDGIDPPENMIRCMDNNFSALAFWRAWHRSYNRWIIRYIYLPMGGGGKYRILNSLLVFSFVAIWHDIELKLLMWGWLVVLFLIPEISVTMIFKKYRNQWWYRHLCGVGAVINIWMMMIANLVGFCLGTDGMWKLLHDLFKTFDGVRFLIISSGALFVGAQIMFEIRESEMRKGINVRC</sequence>
<name>GUP1_CANTR</name>
<evidence type="ECO:0000250" key="1">
    <source>
        <dbReference type="UniProtKB" id="P53154"/>
    </source>
</evidence>
<evidence type="ECO:0000255" key="2"/>
<evidence type="ECO:0000305" key="3"/>
<evidence type="ECO:0000305" key="4">
    <source>
    </source>
</evidence>
<accession>Q7Z877</accession>
<comment type="function">
    <text evidence="1 4">Membrane-bound O-acyltransferase involved in the remodeling of glycosylphosphatidylinositol (GPI) anchors. Acts only on GPI-anchored proteins, but not on free GPI lipids. Also involved in lipid metabolism, having profound effects on sphingolipid-sterol-ordered domains integrity and assembly. Involved in cell integrity and apoptosis.</text>
</comment>
<comment type="subcellular location">
    <subcellularLocation>
        <location evidence="1">Cell membrane</location>
        <topology evidence="2">Multi-pass membrane protein</topology>
    </subcellularLocation>
    <subcellularLocation>
        <location evidence="1">Endoplasmic reticulum membrane</location>
        <topology evidence="2">Multi-pass membrane protein</topology>
    </subcellularLocation>
    <subcellularLocation>
        <location evidence="1">Mitochondrion membrane</location>
        <topology evidence="2">Multi-pass membrane protein</topology>
    </subcellularLocation>
</comment>
<comment type="similarity">
    <text evidence="3">Belongs to the membrane-bound acyltransferase family.</text>
</comment>
<proteinExistence type="inferred from homology"/>
<feature type="chain" id="PRO_0000451586" description="Membrane-bound O-acyltransferase GUP1">
    <location>
        <begin position="1"/>
        <end position="582"/>
    </location>
</feature>
<feature type="topological domain" description="Extracellular" evidence="1">
    <location>
        <begin position="1"/>
        <end position="61"/>
    </location>
</feature>
<feature type="transmembrane region" description="Helical" evidence="2">
    <location>
        <begin position="62"/>
        <end position="82"/>
    </location>
</feature>
<feature type="topological domain" description="Cytoplasmic" evidence="1">
    <location>
        <begin position="83"/>
        <end position="121"/>
    </location>
</feature>
<feature type="transmembrane region" description="Helical" evidence="2">
    <location>
        <begin position="122"/>
        <end position="144"/>
    </location>
</feature>
<feature type="topological domain" description="Extracellular" evidence="1">
    <location>
        <begin position="145"/>
        <end position="158"/>
    </location>
</feature>
<feature type="transmembrane region" description="Helical" evidence="2">
    <location>
        <begin position="159"/>
        <end position="179"/>
    </location>
</feature>
<feature type="topological domain" description="Cytoplasmic" evidence="1">
    <location>
        <begin position="180"/>
        <end position="195"/>
    </location>
</feature>
<feature type="transmembrane region" description="Helical" evidence="2">
    <location>
        <begin position="196"/>
        <end position="216"/>
    </location>
</feature>
<feature type="topological domain" description="Extracellular" evidence="1">
    <location>
        <begin position="217"/>
        <end position="294"/>
    </location>
</feature>
<feature type="transmembrane region" description="Helical" evidence="2">
    <location>
        <begin position="295"/>
        <end position="315"/>
    </location>
</feature>
<feature type="topological domain" description="Cytoplasmic" evidence="1">
    <location>
        <begin position="316"/>
        <end position="343"/>
    </location>
</feature>
<feature type="transmembrane region" description="Helical" evidence="2">
    <location>
        <begin position="344"/>
        <end position="364"/>
    </location>
</feature>
<feature type="topological domain" description="Extracellular" evidence="1">
    <location>
        <begin position="365"/>
        <end position="373"/>
    </location>
</feature>
<feature type="transmembrane region" description="Helical" evidence="2">
    <location>
        <begin position="374"/>
        <end position="394"/>
    </location>
</feature>
<feature type="topological domain" description="Cytoplasmic" evidence="1">
    <location>
        <begin position="395"/>
        <end position="454"/>
    </location>
</feature>
<feature type="transmembrane region" description="Helical" evidence="2">
    <location>
        <begin position="455"/>
        <end position="475"/>
    </location>
</feature>
<feature type="transmembrane region" description="Helical" evidence="2">
    <location>
        <begin position="476"/>
        <end position="496"/>
    </location>
</feature>
<feature type="topological domain" description="Cytoplasmic" evidence="1">
    <location>
        <begin position="497"/>
        <end position="507"/>
    </location>
</feature>
<feature type="transmembrane region" description="Helical" evidence="2">
    <location>
        <begin position="508"/>
        <end position="528"/>
    </location>
</feature>
<feature type="topological domain" description="Extracellular" evidence="1">
    <location>
        <begin position="529"/>
        <end position="548"/>
    </location>
</feature>
<feature type="transmembrane region" description="Helical" evidence="2">
    <location>
        <begin position="549"/>
        <end position="569"/>
    </location>
</feature>
<feature type="topological domain" description="Cytoplasmic" evidence="1">
    <location>
        <begin position="570"/>
        <end position="582"/>
    </location>
</feature>
<feature type="active site" evidence="1">
    <location>
        <position position="469"/>
    </location>
</feature>
<protein>
    <recommendedName>
        <fullName>Membrane-bound O-acyltransferase GUP1</fullName>
    </recommendedName>
    <alternativeName>
        <fullName>Glycerol uptake protein 1</fullName>
    </alternativeName>
</protein>
<reference key="1">
    <citation type="journal article" date="2004" name="FEMS Yeast Res.">
        <title>Yeast orthologues associated with glycerol transport and metabolism.</title>
        <authorList>
            <person name="Neves L."/>
            <person name="Oliveira R."/>
            <person name="Lucas C."/>
        </authorList>
    </citation>
    <scope>NUCLEOTIDE SEQUENCE [GENOMIC DNA]</scope>
    <scope>FUNCTION</scope>
    <source>
        <strain>IGC3097</strain>
    </source>
</reference>
<organism>
    <name type="scientific">Candida tropicalis</name>
    <name type="common">Yeast</name>
    <dbReference type="NCBI Taxonomy" id="5482"/>
    <lineage>
        <taxon>Eukaryota</taxon>
        <taxon>Fungi</taxon>
        <taxon>Dikarya</taxon>
        <taxon>Ascomycota</taxon>
        <taxon>Saccharomycotina</taxon>
        <taxon>Pichiomycetes</taxon>
        <taxon>Debaryomycetaceae</taxon>
        <taxon>Candida/Lodderomyces clade</taxon>
        <taxon>Candida</taxon>
    </lineage>
</organism>
<keyword id="KW-1003">Cell membrane</keyword>
<keyword id="KW-0256">Endoplasmic reticulum</keyword>
<keyword id="KW-0472">Membrane</keyword>
<keyword id="KW-0496">Mitochondrion</keyword>
<keyword id="KW-0812">Transmembrane</keyword>
<keyword id="KW-1133">Transmembrane helix</keyword>
<dbReference type="EMBL" id="AY299512">
    <property type="protein sequence ID" value="AAQ16649.1"/>
    <property type="molecule type" value="Genomic_DNA"/>
</dbReference>
<dbReference type="SMR" id="Q7Z877"/>
<dbReference type="VEuPathDB" id="FungiDB:CTMYA2_007890"/>
<dbReference type="VEuPathDB" id="FungiDB:CTRG_03643"/>
<dbReference type="GO" id="GO:0005789">
    <property type="term" value="C:endoplasmic reticulum membrane"/>
    <property type="evidence" value="ECO:0007669"/>
    <property type="project" value="UniProtKB-SubCell"/>
</dbReference>
<dbReference type="GO" id="GO:0031966">
    <property type="term" value="C:mitochondrial membrane"/>
    <property type="evidence" value="ECO:0007669"/>
    <property type="project" value="UniProtKB-SubCell"/>
</dbReference>
<dbReference type="GO" id="GO:0005886">
    <property type="term" value="C:plasma membrane"/>
    <property type="evidence" value="ECO:0007669"/>
    <property type="project" value="UniProtKB-SubCell"/>
</dbReference>
<dbReference type="GO" id="GO:0008374">
    <property type="term" value="F:O-acyltransferase activity"/>
    <property type="evidence" value="ECO:0007669"/>
    <property type="project" value="TreeGrafter"/>
</dbReference>
<dbReference type="GO" id="GO:0006506">
    <property type="term" value="P:GPI anchor biosynthetic process"/>
    <property type="evidence" value="ECO:0007669"/>
    <property type="project" value="TreeGrafter"/>
</dbReference>
<dbReference type="InterPro" id="IPR051085">
    <property type="entry name" value="MB_O-acyltransferase"/>
</dbReference>
<dbReference type="InterPro" id="IPR004299">
    <property type="entry name" value="MBOAT_fam"/>
</dbReference>
<dbReference type="PANTHER" id="PTHR13285">
    <property type="entry name" value="ACYLTRANSFERASE"/>
    <property type="match status" value="1"/>
</dbReference>
<dbReference type="PANTHER" id="PTHR13285:SF18">
    <property type="entry name" value="PROTEIN-CYSTEINE N-PALMITOYLTRANSFERASE RASP"/>
    <property type="match status" value="1"/>
</dbReference>
<dbReference type="Pfam" id="PF03062">
    <property type="entry name" value="MBOAT"/>
    <property type="match status" value="1"/>
</dbReference>